<protein>
    <recommendedName>
        <fullName evidence="1">Elongation factor P</fullName>
        <shortName evidence="1">EF-P</shortName>
    </recommendedName>
</protein>
<gene>
    <name evidence="1" type="primary">efp</name>
    <name type="ordered locus">Bcen2424_1141</name>
</gene>
<feature type="chain" id="PRO_1000010695" description="Elongation factor P">
    <location>
        <begin position="1"/>
        <end position="185"/>
    </location>
</feature>
<accession>A0K5W6</accession>
<evidence type="ECO:0000255" key="1">
    <source>
        <dbReference type="HAMAP-Rule" id="MF_00141"/>
    </source>
</evidence>
<comment type="function">
    <text evidence="1">Involved in peptide bond synthesis. Stimulates efficient translation and peptide-bond synthesis on native or reconstituted 70S ribosomes in vitro. Probably functions indirectly by altering the affinity of the ribosome for aminoacyl-tRNA, thus increasing their reactivity as acceptors for peptidyl transferase.</text>
</comment>
<comment type="pathway">
    <text evidence="1">Protein biosynthesis; polypeptide chain elongation.</text>
</comment>
<comment type="subcellular location">
    <subcellularLocation>
        <location evidence="1">Cytoplasm</location>
    </subcellularLocation>
</comment>
<comment type="similarity">
    <text evidence="1">Belongs to the elongation factor P family.</text>
</comment>
<keyword id="KW-0963">Cytoplasm</keyword>
<keyword id="KW-0251">Elongation factor</keyword>
<keyword id="KW-0648">Protein biosynthesis</keyword>
<reference key="1">
    <citation type="submission" date="2006-08" db="EMBL/GenBank/DDBJ databases">
        <title>Complete sequence of chromosome 1 of Burkholderia cenocepacia HI2424.</title>
        <authorList>
            <person name="Copeland A."/>
            <person name="Lucas S."/>
            <person name="Lapidus A."/>
            <person name="Barry K."/>
            <person name="Detter J.C."/>
            <person name="Glavina del Rio T."/>
            <person name="Hammon N."/>
            <person name="Israni S."/>
            <person name="Pitluck S."/>
            <person name="Chain P."/>
            <person name="Malfatti S."/>
            <person name="Shin M."/>
            <person name="Vergez L."/>
            <person name="Schmutz J."/>
            <person name="Larimer F."/>
            <person name="Land M."/>
            <person name="Hauser L."/>
            <person name="Kyrpides N."/>
            <person name="Kim E."/>
            <person name="LiPuma J.J."/>
            <person name="Gonzalez C.F."/>
            <person name="Konstantinidis K."/>
            <person name="Tiedje J.M."/>
            <person name="Richardson P."/>
        </authorList>
    </citation>
    <scope>NUCLEOTIDE SEQUENCE [LARGE SCALE GENOMIC DNA]</scope>
    <source>
        <strain>HI2424</strain>
    </source>
</reference>
<organism>
    <name type="scientific">Burkholderia cenocepacia (strain HI2424)</name>
    <dbReference type="NCBI Taxonomy" id="331272"/>
    <lineage>
        <taxon>Bacteria</taxon>
        <taxon>Pseudomonadati</taxon>
        <taxon>Pseudomonadota</taxon>
        <taxon>Betaproteobacteria</taxon>
        <taxon>Burkholderiales</taxon>
        <taxon>Burkholderiaceae</taxon>
        <taxon>Burkholderia</taxon>
        <taxon>Burkholderia cepacia complex</taxon>
    </lineage>
</organism>
<name>EFP_BURCH</name>
<proteinExistence type="inferred from homology"/>
<dbReference type="EMBL" id="CP000458">
    <property type="protein sequence ID" value="ABK07893.1"/>
    <property type="molecule type" value="Genomic_DNA"/>
</dbReference>
<dbReference type="RefSeq" id="WP_006476487.1">
    <property type="nucleotide sequence ID" value="NC_008542.1"/>
</dbReference>
<dbReference type="SMR" id="A0K5W6"/>
<dbReference type="GeneID" id="83047893"/>
<dbReference type="KEGG" id="bch:Bcen2424_1141"/>
<dbReference type="HOGENOM" id="CLU_074944_2_1_4"/>
<dbReference type="UniPathway" id="UPA00345"/>
<dbReference type="GO" id="GO:0005737">
    <property type="term" value="C:cytoplasm"/>
    <property type="evidence" value="ECO:0007669"/>
    <property type="project" value="UniProtKB-SubCell"/>
</dbReference>
<dbReference type="GO" id="GO:0003746">
    <property type="term" value="F:translation elongation factor activity"/>
    <property type="evidence" value="ECO:0007669"/>
    <property type="project" value="UniProtKB-UniRule"/>
</dbReference>
<dbReference type="GO" id="GO:0043043">
    <property type="term" value="P:peptide biosynthetic process"/>
    <property type="evidence" value="ECO:0007669"/>
    <property type="project" value="InterPro"/>
</dbReference>
<dbReference type="CDD" id="cd04470">
    <property type="entry name" value="S1_EF-P_repeat_1"/>
    <property type="match status" value="1"/>
</dbReference>
<dbReference type="CDD" id="cd05794">
    <property type="entry name" value="S1_EF-P_repeat_2"/>
    <property type="match status" value="1"/>
</dbReference>
<dbReference type="FunFam" id="2.30.30.30:FF:000003">
    <property type="entry name" value="Elongation factor P"/>
    <property type="match status" value="1"/>
</dbReference>
<dbReference type="FunFam" id="2.40.50.140:FF:000004">
    <property type="entry name" value="Elongation factor P"/>
    <property type="match status" value="1"/>
</dbReference>
<dbReference type="FunFam" id="2.40.50.140:FF:000009">
    <property type="entry name" value="Elongation factor P"/>
    <property type="match status" value="1"/>
</dbReference>
<dbReference type="Gene3D" id="2.30.30.30">
    <property type="match status" value="1"/>
</dbReference>
<dbReference type="Gene3D" id="2.40.50.140">
    <property type="entry name" value="Nucleic acid-binding proteins"/>
    <property type="match status" value="2"/>
</dbReference>
<dbReference type="HAMAP" id="MF_00141">
    <property type="entry name" value="EF_P"/>
    <property type="match status" value="1"/>
</dbReference>
<dbReference type="InterPro" id="IPR015365">
    <property type="entry name" value="Elong-fact-P_C"/>
</dbReference>
<dbReference type="InterPro" id="IPR012340">
    <property type="entry name" value="NA-bd_OB-fold"/>
</dbReference>
<dbReference type="InterPro" id="IPR014722">
    <property type="entry name" value="Rib_uL2_dom2"/>
</dbReference>
<dbReference type="InterPro" id="IPR020599">
    <property type="entry name" value="Transl_elong_fac_P/YeiP"/>
</dbReference>
<dbReference type="InterPro" id="IPR013185">
    <property type="entry name" value="Transl_elong_KOW-like"/>
</dbReference>
<dbReference type="InterPro" id="IPR001059">
    <property type="entry name" value="Transl_elong_P/YeiP_cen"/>
</dbReference>
<dbReference type="InterPro" id="IPR013852">
    <property type="entry name" value="Transl_elong_P/YeiP_CS"/>
</dbReference>
<dbReference type="InterPro" id="IPR011768">
    <property type="entry name" value="Transl_elongation_fac_P"/>
</dbReference>
<dbReference type="InterPro" id="IPR008991">
    <property type="entry name" value="Translation_prot_SH3-like_sf"/>
</dbReference>
<dbReference type="NCBIfam" id="TIGR00038">
    <property type="entry name" value="efp"/>
    <property type="match status" value="1"/>
</dbReference>
<dbReference type="NCBIfam" id="NF001810">
    <property type="entry name" value="PRK00529.1"/>
    <property type="match status" value="1"/>
</dbReference>
<dbReference type="PANTHER" id="PTHR30053">
    <property type="entry name" value="ELONGATION FACTOR P"/>
    <property type="match status" value="1"/>
</dbReference>
<dbReference type="PANTHER" id="PTHR30053:SF12">
    <property type="entry name" value="ELONGATION FACTOR P (EF-P) FAMILY PROTEIN"/>
    <property type="match status" value="1"/>
</dbReference>
<dbReference type="Pfam" id="PF01132">
    <property type="entry name" value="EFP"/>
    <property type="match status" value="1"/>
</dbReference>
<dbReference type="Pfam" id="PF08207">
    <property type="entry name" value="EFP_N"/>
    <property type="match status" value="1"/>
</dbReference>
<dbReference type="Pfam" id="PF09285">
    <property type="entry name" value="Elong-fact-P_C"/>
    <property type="match status" value="1"/>
</dbReference>
<dbReference type="PIRSF" id="PIRSF005901">
    <property type="entry name" value="EF-P"/>
    <property type="match status" value="1"/>
</dbReference>
<dbReference type="SMART" id="SM01185">
    <property type="entry name" value="EFP"/>
    <property type="match status" value="1"/>
</dbReference>
<dbReference type="SMART" id="SM00841">
    <property type="entry name" value="Elong-fact-P_C"/>
    <property type="match status" value="1"/>
</dbReference>
<dbReference type="SUPFAM" id="SSF50249">
    <property type="entry name" value="Nucleic acid-binding proteins"/>
    <property type="match status" value="2"/>
</dbReference>
<dbReference type="SUPFAM" id="SSF50104">
    <property type="entry name" value="Translation proteins SH3-like domain"/>
    <property type="match status" value="1"/>
</dbReference>
<dbReference type="PROSITE" id="PS01275">
    <property type="entry name" value="EFP"/>
    <property type="match status" value="1"/>
</dbReference>
<sequence>MKTAQELRVGNVVQIGSEAWVIAKAEYNKSGRNSAVVKMKMKNLLSNAGQESVYKADDKFEVVVLDRKEVTYSYFADPMYVFMDADYNQYEVEAEMMGEALNYLEDGMACEVVFYNEKAISVELPTVLVREITYTEPAVKGDTSSGKVLKNAKLATGFELQVPLFCNTGDKIEIDTRTNEYRSRA</sequence>